<dbReference type="EMBL" id="CP001393">
    <property type="protein sequence ID" value="ACM60906.1"/>
    <property type="molecule type" value="Genomic_DNA"/>
</dbReference>
<dbReference type="RefSeq" id="WP_013402856.1">
    <property type="nucleotide sequence ID" value="NC_012034.1"/>
</dbReference>
<dbReference type="SMR" id="B9MKP8"/>
<dbReference type="STRING" id="521460.Athe_1813"/>
<dbReference type="GeneID" id="31773170"/>
<dbReference type="KEGG" id="ate:Athe_1813"/>
<dbReference type="eggNOG" id="COG0233">
    <property type="taxonomic scope" value="Bacteria"/>
</dbReference>
<dbReference type="HOGENOM" id="CLU_073981_2_0_9"/>
<dbReference type="Proteomes" id="UP000007723">
    <property type="component" value="Chromosome"/>
</dbReference>
<dbReference type="GO" id="GO:0005737">
    <property type="term" value="C:cytoplasm"/>
    <property type="evidence" value="ECO:0007669"/>
    <property type="project" value="UniProtKB-SubCell"/>
</dbReference>
<dbReference type="GO" id="GO:0043023">
    <property type="term" value="F:ribosomal large subunit binding"/>
    <property type="evidence" value="ECO:0007669"/>
    <property type="project" value="TreeGrafter"/>
</dbReference>
<dbReference type="GO" id="GO:0006415">
    <property type="term" value="P:translational termination"/>
    <property type="evidence" value="ECO:0007669"/>
    <property type="project" value="UniProtKB-UniRule"/>
</dbReference>
<dbReference type="CDD" id="cd00520">
    <property type="entry name" value="RRF"/>
    <property type="match status" value="1"/>
</dbReference>
<dbReference type="FunFam" id="1.10.132.20:FF:000001">
    <property type="entry name" value="Ribosome-recycling factor"/>
    <property type="match status" value="1"/>
</dbReference>
<dbReference type="FunFam" id="3.30.1360.40:FF:000001">
    <property type="entry name" value="Ribosome-recycling factor"/>
    <property type="match status" value="1"/>
</dbReference>
<dbReference type="Gene3D" id="3.30.1360.40">
    <property type="match status" value="1"/>
</dbReference>
<dbReference type="Gene3D" id="1.10.132.20">
    <property type="entry name" value="Ribosome-recycling factor"/>
    <property type="match status" value="1"/>
</dbReference>
<dbReference type="HAMAP" id="MF_00040">
    <property type="entry name" value="RRF"/>
    <property type="match status" value="1"/>
</dbReference>
<dbReference type="InterPro" id="IPR002661">
    <property type="entry name" value="Ribosome_recyc_fac"/>
</dbReference>
<dbReference type="InterPro" id="IPR023584">
    <property type="entry name" value="Ribosome_recyc_fac_dom"/>
</dbReference>
<dbReference type="InterPro" id="IPR036191">
    <property type="entry name" value="RRF_sf"/>
</dbReference>
<dbReference type="NCBIfam" id="TIGR00496">
    <property type="entry name" value="frr"/>
    <property type="match status" value="1"/>
</dbReference>
<dbReference type="PANTHER" id="PTHR20982:SF3">
    <property type="entry name" value="MITOCHONDRIAL RIBOSOME RECYCLING FACTOR PSEUDO 1"/>
    <property type="match status" value="1"/>
</dbReference>
<dbReference type="PANTHER" id="PTHR20982">
    <property type="entry name" value="RIBOSOME RECYCLING FACTOR"/>
    <property type="match status" value="1"/>
</dbReference>
<dbReference type="Pfam" id="PF01765">
    <property type="entry name" value="RRF"/>
    <property type="match status" value="1"/>
</dbReference>
<dbReference type="SUPFAM" id="SSF55194">
    <property type="entry name" value="Ribosome recycling factor, RRF"/>
    <property type="match status" value="1"/>
</dbReference>
<reference key="1">
    <citation type="submission" date="2009-01" db="EMBL/GenBank/DDBJ databases">
        <title>Complete sequence of chromosome of Caldicellulosiruptor becscii DSM 6725.</title>
        <authorList>
            <person name="Lucas S."/>
            <person name="Copeland A."/>
            <person name="Lapidus A."/>
            <person name="Glavina del Rio T."/>
            <person name="Tice H."/>
            <person name="Bruce D."/>
            <person name="Goodwin L."/>
            <person name="Pitluck S."/>
            <person name="Sims D."/>
            <person name="Meincke L."/>
            <person name="Brettin T."/>
            <person name="Detter J.C."/>
            <person name="Han C."/>
            <person name="Larimer F."/>
            <person name="Land M."/>
            <person name="Hauser L."/>
            <person name="Kyrpides N."/>
            <person name="Ovchinnikova G."/>
            <person name="Kataeva I."/>
            <person name="Adams M.W.W."/>
        </authorList>
    </citation>
    <scope>NUCLEOTIDE SEQUENCE [LARGE SCALE GENOMIC DNA]</scope>
    <source>
        <strain>ATCC BAA-1888 / DSM 6725 / KCTC 15123 / Z-1320</strain>
    </source>
</reference>
<gene>
    <name evidence="1" type="primary">frr</name>
    <name type="ordered locus">Athe_1813</name>
</gene>
<organism>
    <name type="scientific">Caldicellulosiruptor bescii (strain ATCC BAA-1888 / DSM 6725 / KCTC 15123 / Z-1320)</name>
    <name type="common">Anaerocellum thermophilum</name>
    <dbReference type="NCBI Taxonomy" id="521460"/>
    <lineage>
        <taxon>Bacteria</taxon>
        <taxon>Bacillati</taxon>
        <taxon>Bacillota</taxon>
        <taxon>Bacillota incertae sedis</taxon>
        <taxon>Caldicellulosiruptorales</taxon>
        <taxon>Caldicellulosiruptoraceae</taxon>
        <taxon>Caldicellulosiruptor</taxon>
    </lineage>
</organism>
<sequence>MAEPIQVAEEKMKKAIETLKEEFATIRAGRANPHILDKVMVDYYGVPTPIPQVASITVPEARMIVIQPWEARMLKEIEKAIQKSDLGVNPTNDGKVIRLIFPELTEERRKELVKQVKKMAEDAKVAIRNIRREALDEYKKMKKNNEITEDDLKDAEEDVQKLHDKYIEQIEKLLSAKEKEIMEV</sequence>
<proteinExistence type="inferred from homology"/>
<keyword id="KW-0963">Cytoplasm</keyword>
<keyword id="KW-0648">Protein biosynthesis</keyword>
<accession>B9MKP8</accession>
<feature type="chain" id="PRO_1000194889" description="Ribosome-recycling factor">
    <location>
        <begin position="1"/>
        <end position="184"/>
    </location>
</feature>
<protein>
    <recommendedName>
        <fullName evidence="1">Ribosome-recycling factor</fullName>
        <shortName evidence="1">RRF</shortName>
    </recommendedName>
    <alternativeName>
        <fullName evidence="1">Ribosome-releasing factor</fullName>
    </alternativeName>
</protein>
<evidence type="ECO:0000255" key="1">
    <source>
        <dbReference type="HAMAP-Rule" id="MF_00040"/>
    </source>
</evidence>
<comment type="function">
    <text evidence="1">Responsible for the release of ribosomes from messenger RNA at the termination of protein biosynthesis. May increase the efficiency of translation by recycling ribosomes from one round of translation to another.</text>
</comment>
<comment type="subcellular location">
    <subcellularLocation>
        <location evidence="1">Cytoplasm</location>
    </subcellularLocation>
</comment>
<comment type="similarity">
    <text evidence="1">Belongs to the RRF family.</text>
</comment>
<name>RRF_CALBD</name>